<proteinExistence type="evidence at protein level"/>
<gene>
    <name evidence="3" type="primary">khk</name>
    <name evidence="3 5" type="ordered locus">HVO_1812</name>
</gene>
<organism evidence="5 6">
    <name type="scientific">Haloferax volcanii (strain ATCC 29605 / DSM 3757 / JCM 8879 / NBRC 14742 / NCIMB 2012 / VKM B-1768 / DS2)</name>
    <name type="common">Halobacterium volcanii</name>
    <dbReference type="NCBI Taxonomy" id="309800"/>
    <lineage>
        <taxon>Archaea</taxon>
        <taxon>Methanobacteriati</taxon>
        <taxon>Methanobacteriota</taxon>
        <taxon>Stenosarchaea group</taxon>
        <taxon>Halobacteria</taxon>
        <taxon>Halobacteriales</taxon>
        <taxon>Haloferacaceae</taxon>
        <taxon>Haloferax</taxon>
    </lineage>
</organism>
<accession>D4GSD6</accession>
<accession>L9VDQ9</accession>
<dbReference type="EC" id="2.7.1.3" evidence="2"/>
<dbReference type="EMBL" id="CP001956">
    <property type="protein sequence ID" value="ADE03042.1"/>
    <property type="molecule type" value="Genomic_DNA"/>
</dbReference>
<dbReference type="RefSeq" id="WP_004041695.1">
    <property type="nucleotide sequence ID" value="NC_013967.1"/>
</dbReference>
<dbReference type="STRING" id="309800.HVO_1812"/>
<dbReference type="PaxDb" id="309800-C498_04368"/>
<dbReference type="EnsemblBacteria" id="ADE03042">
    <property type="protein sequence ID" value="ADE03042"/>
    <property type="gene ID" value="HVO_1812"/>
</dbReference>
<dbReference type="GeneID" id="8925476"/>
<dbReference type="KEGG" id="hvo:HVO_1812"/>
<dbReference type="PATRIC" id="fig|309800.29.peg.851"/>
<dbReference type="eggNOG" id="arCOG00014">
    <property type="taxonomic scope" value="Archaea"/>
</dbReference>
<dbReference type="HOGENOM" id="CLU_061377_0_0_2"/>
<dbReference type="OrthoDB" id="30795at2157"/>
<dbReference type="UniPathway" id="UPA00202"/>
<dbReference type="Proteomes" id="UP000008243">
    <property type="component" value="Chromosome"/>
</dbReference>
<dbReference type="GO" id="GO:0042802">
    <property type="term" value="F:identical protein binding"/>
    <property type="evidence" value="ECO:0000314"/>
    <property type="project" value="UniProtKB"/>
</dbReference>
<dbReference type="GO" id="GO:0004454">
    <property type="term" value="F:ketohexokinase activity"/>
    <property type="evidence" value="ECO:0000314"/>
    <property type="project" value="UniProtKB"/>
</dbReference>
<dbReference type="GO" id="GO:0042803">
    <property type="term" value="F:protein homodimerization activity"/>
    <property type="evidence" value="ECO:0000314"/>
    <property type="project" value="UniProtKB"/>
</dbReference>
<dbReference type="GO" id="GO:0006000">
    <property type="term" value="P:fructose metabolic process"/>
    <property type="evidence" value="ECO:0000314"/>
    <property type="project" value="UniProtKB"/>
</dbReference>
<dbReference type="Gene3D" id="3.40.1190.20">
    <property type="match status" value="1"/>
</dbReference>
<dbReference type="InterPro" id="IPR029056">
    <property type="entry name" value="Ribokinase-like"/>
</dbReference>
<dbReference type="Pfam" id="PF25270">
    <property type="entry name" value="Khk"/>
    <property type="match status" value="1"/>
</dbReference>
<dbReference type="SUPFAM" id="SSF53613">
    <property type="entry name" value="Ribokinase-like"/>
    <property type="match status" value="1"/>
</dbReference>
<evidence type="ECO:0000250" key="1">
    <source>
        <dbReference type="UniProtKB" id="P50053"/>
    </source>
</evidence>
<evidence type="ECO:0000269" key="2">
    <source>
    </source>
</evidence>
<evidence type="ECO:0000303" key="3">
    <source>
    </source>
</evidence>
<evidence type="ECO:0000305" key="4"/>
<evidence type="ECO:0000312" key="5">
    <source>
        <dbReference type="EMBL" id="ADE03042.1"/>
    </source>
</evidence>
<evidence type="ECO:0000312" key="6">
    <source>
        <dbReference type="Proteomes" id="UP000008243"/>
    </source>
</evidence>
<protein>
    <recommendedName>
        <fullName evidence="3">Ketohexokinase</fullName>
        <ecNumber evidence="2">2.7.1.3</ecNumber>
    </recommendedName>
    <alternativeName>
        <fullName evidence="3">HvKHK</fullName>
    </alternativeName>
</protein>
<reference evidence="5 6" key="1">
    <citation type="journal article" date="2010" name="PLoS ONE">
        <title>The complete genome sequence of Haloferax volcanii DS2, a model archaeon.</title>
        <authorList>
            <person name="Hartman A.L."/>
            <person name="Norais C."/>
            <person name="Badger J.H."/>
            <person name="Delmas S."/>
            <person name="Haldenby S."/>
            <person name="Madupu R."/>
            <person name="Robinson J."/>
            <person name="Khouri H."/>
            <person name="Ren Q."/>
            <person name="Lowe T.M."/>
            <person name="Maupin-Furlow J."/>
            <person name="Pohlschroder M."/>
            <person name="Daniels C."/>
            <person name="Pfeiffer F."/>
            <person name="Allers T."/>
            <person name="Eisen J.A."/>
        </authorList>
    </citation>
    <scope>NUCLEOTIDE SEQUENCE [LARGE SCALE GENOMIC DNA]</scope>
    <source>
        <strain evidence="6">ATCC 29605 / DSM 3757 / JCM 8879 / NBRC 14742 / NCIMB 2012 / VKM B-1768 / DS2</strain>
    </source>
</reference>
<reference key="2">
    <citation type="journal article" date="2024" name="FEMS Microbiol. Lett.">
        <title>Identification and characterization of a novel type of ketohexokinase from the haloarchaeon Haloferax volcanii.</title>
        <authorList>
            <person name="Ortjohann M."/>
            <person name="Schoenheit P."/>
        </authorList>
    </citation>
    <scope>FUNCTION</scope>
    <scope>CATALYTIC ACTIVITY</scope>
    <scope>ACTIVITY REGULATION</scope>
    <scope>BIOPHYSICOCHEMICAL PROPERTIES</scope>
    <scope>PATHWAY</scope>
    <scope>SUBUNIT</scope>
    <scope>IDENTIFICATION BY MASS SPECTROMETRY</scope>
    <scope>DISRUPTION PHENOTYPE</scope>
    <source>
        <strain evidence="3">DS2 / DS70 / H26</strain>
    </source>
</reference>
<keyword id="KW-0119">Carbohydrate metabolism</keyword>
<keyword id="KW-0418">Kinase</keyword>
<keyword id="KW-1185">Reference proteome</keyword>
<keyword id="KW-0808">Transferase</keyword>
<sequence length="375" mass="40550">METPDETTVRAADSCRESLPERVDGGRVLFGFDGYIDRVREFVSERQSADTYERVPTLDAFAERVNDSVEAESSLTFEWIQDGVRTGGHVSHLARAFDRMGFEPGVVGCLGDPVEEPFVEEFGHLPLETLGSPGYTDAVEFGDGKLMLTEIGALMTLDWAGIESRVGLDRLAELVDGAELVGMGYWSEMPELPDVARGLREELWPTLSDPPETLLLDPGDLRKRGPDVVAAGVEQVSALDDAVRVVVSANRYETRYLARLAGVESDDFGRESQAAFDHLGVSRFAGHGIEEAHLVDEAGTATVGVPRTDDPVLTTSSGDHFNAGLALAHVLDLGRAESLVVGNAVAGHFVRTGSPPTYDELRAFASGYLDYFDAA</sequence>
<comment type="function">
    <text evidence="2">Catalyzes the ATP-dependent phosphorylation of the ketose sugar fructose to fructose-1-phosphate. Does not produce fructose-6-phosphate. The sugars D-glucose, D-galactose, L-rhamnose, D-xylose, L-arabinose and D-ribose are not substrates of this enzyme.</text>
</comment>
<comment type="catalytic activity">
    <reaction evidence="2">
        <text>beta-D-fructose + ATP = beta-D-fructose 1-phosphate + ADP + H(+)</text>
        <dbReference type="Rhea" id="RHEA:18145"/>
        <dbReference type="ChEBI" id="CHEBI:15378"/>
        <dbReference type="ChEBI" id="CHEBI:28645"/>
        <dbReference type="ChEBI" id="CHEBI:30616"/>
        <dbReference type="ChEBI" id="CHEBI:138881"/>
        <dbReference type="ChEBI" id="CHEBI:456216"/>
        <dbReference type="EC" id="2.7.1.3"/>
    </reaction>
</comment>
<comment type="activity regulation">
    <text evidence="2">Activated in the presence of 0.5 M KCl. 85% activity at 3.5 M KCl. 60% activity without KCl.</text>
</comment>
<comment type="biophysicochemical properties">
    <kinetics>
        <KM evidence="2">0.47 mM for ATP (at pH 7.5 and 42 degrees Celsius)</KM>
        <KM evidence="2">1.29 mM for fructose (at pH 7.5 and 42 degrees Celsius)</KM>
        <Vmax evidence="2">59.0 umol/min/mg enzyme toward fructose 1-phosphate (at pH 7.5 and 42 degrees Celsius)</Vmax>
        <text evidence="2">kcat is 47 sec(-1) for the phosphorylation of fructose.</text>
    </kinetics>
</comment>
<comment type="pathway">
    <text evidence="2">Carbohydrate metabolism; fructose metabolism.</text>
</comment>
<comment type="subunit">
    <text evidence="2">Homodimer.</text>
</comment>
<comment type="disruption phenotype">
    <text evidence="2">Grows as wild-type on sucrose.</text>
</comment>
<comment type="similarity">
    <text evidence="4">Belongs to the carbohydrate kinase PfkB family.</text>
</comment>
<name>KHK_HALVD</name>
<feature type="chain" id="PRO_0000460824" description="Ketohexokinase">
    <location>
        <begin position="1"/>
        <end position="375"/>
    </location>
</feature>
<feature type="binding site" evidence="1">
    <location>
        <position position="319"/>
    </location>
    <ligand>
        <name>beta-D-fructose</name>
        <dbReference type="ChEBI" id="CHEBI:28645"/>
    </ligand>
</feature>